<accession>A9KMW6</accession>
<organism>
    <name type="scientific">Lachnoclostridium phytofermentans (strain ATCC 700394 / DSM 18823 / ISDg)</name>
    <name type="common">Clostridium phytofermentans</name>
    <dbReference type="NCBI Taxonomy" id="357809"/>
    <lineage>
        <taxon>Bacteria</taxon>
        <taxon>Bacillati</taxon>
        <taxon>Bacillota</taxon>
        <taxon>Clostridia</taxon>
        <taxon>Lachnospirales</taxon>
        <taxon>Lachnospiraceae</taxon>
    </lineage>
</organism>
<comment type="similarity">
    <text evidence="1">Belongs to the bacterial ribosomal protein bS21 family.</text>
</comment>
<evidence type="ECO:0000255" key="1">
    <source>
        <dbReference type="HAMAP-Rule" id="MF_00358"/>
    </source>
</evidence>
<evidence type="ECO:0000256" key="2">
    <source>
        <dbReference type="SAM" id="MobiDB-lite"/>
    </source>
</evidence>
<evidence type="ECO:0000305" key="3"/>
<gene>
    <name evidence="1" type="primary">rpsU</name>
    <name type="ordered locus">Cphy_2616</name>
</gene>
<dbReference type="EMBL" id="CP000885">
    <property type="protein sequence ID" value="ABX42977.1"/>
    <property type="molecule type" value="Genomic_DNA"/>
</dbReference>
<dbReference type="RefSeq" id="WP_012200629.1">
    <property type="nucleotide sequence ID" value="NC_010001.1"/>
</dbReference>
<dbReference type="SMR" id="A9KMW6"/>
<dbReference type="STRING" id="357809.Cphy_2616"/>
<dbReference type="KEGG" id="cpy:Cphy_2616"/>
<dbReference type="eggNOG" id="COG0828">
    <property type="taxonomic scope" value="Bacteria"/>
</dbReference>
<dbReference type="HOGENOM" id="CLU_159258_3_2_9"/>
<dbReference type="OrthoDB" id="9799244at2"/>
<dbReference type="Proteomes" id="UP000000370">
    <property type="component" value="Chromosome"/>
</dbReference>
<dbReference type="GO" id="GO:1990904">
    <property type="term" value="C:ribonucleoprotein complex"/>
    <property type="evidence" value="ECO:0007669"/>
    <property type="project" value="UniProtKB-KW"/>
</dbReference>
<dbReference type="GO" id="GO:0005840">
    <property type="term" value="C:ribosome"/>
    <property type="evidence" value="ECO:0007669"/>
    <property type="project" value="UniProtKB-KW"/>
</dbReference>
<dbReference type="GO" id="GO:0003735">
    <property type="term" value="F:structural constituent of ribosome"/>
    <property type="evidence" value="ECO:0007669"/>
    <property type="project" value="InterPro"/>
</dbReference>
<dbReference type="GO" id="GO:0006412">
    <property type="term" value="P:translation"/>
    <property type="evidence" value="ECO:0007669"/>
    <property type="project" value="UniProtKB-UniRule"/>
</dbReference>
<dbReference type="Gene3D" id="1.20.5.1150">
    <property type="entry name" value="Ribosomal protein S8"/>
    <property type="match status" value="1"/>
</dbReference>
<dbReference type="HAMAP" id="MF_00358">
    <property type="entry name" value="Ribosomal_bS21"/>
    <property type="match status" value="1"/>
</dbReference>
<dbReference type="InterPro" id="IPR001911">
    <property type="entry name" value="Ribosomal_bS21"/>
</dbReference>
<dbReference type="InterPro" id="IPR018278">
    <property type="entry name" value="Ribosomal_bS21_CS"/>
</dbReference>
<dbReference type="InterPro" id="IPR038380">
    <property type="entry name" value="Ribosomal_bS21_sf"/>
</dbReference>
<dbReference type="NCBIfam" id="TIGR00030">
    <property type="entry name" value="S21p"/>
    <property type="match status" value="1"/>
</dbReference>
<dbReference type="PANTHER" id="PTHR21109">
    <property type="entry name" value="MITOCHONDRIAL 28S RIBOSOMAL PROTEIN S21"/>
    <property type="match status" value="1"/>
</dbReference>
<dbReference type="PANTHER" id="PTHR21109:SF22">
    <property type="entry name" value="SMALL RIBOSOMAL SUBUNIT PROTEIN BS21"/>
    <property type="match status" value="1"/>
</dbReference>
<dbReference type="Pfam" id="PF01165">
    <property type="entry name" value="Ribosomal_S21"/>
    <property type="match status" value="1"/>
</dbReference>
<dbReference type="PRINTS" id="PR00976">
    <property type="entry name" value="RIBOSOMALS21"/>
</dbReference>
<dbReference type="PROSITE" id="PS01181">
    <property type="entry name" value="RIBOSOMAL_S21"/>
    <property type="match status" value="1"/>
</dbReference>
<reference key="1">
    <citation type="submission" date="2007-11" db="EMBL/GenBank/DDBJ databases">
        <title>Complete genome sequence of Clostridium phytofermentans ISDg.</title>
        <authorList>
            <person name="Leschine S.B."/>
            <person name="Warnick T.A."/>
            <person name="Blanchard J.L."/>
            <person name="Schnell D.J."/>
            <person name="Petit E.L."/>
            <person name="LaTouf W.G."/>
            <person name="Copeland A."/>
            <person name="Lucas S."/>
            <person name="Lapidus A."/>
            <person name="Barry K."/>
            <person name="Glavina del Rio T."/>
            <person name="Dalin E."/>
            <person name="Tice H."/>
            <person name="Pitluck S."/>
            <person name="Kiss H."/>
            <person name="Brettin T."/>
            <person name="Bruce D."/>
            <person name="Detter J.C."/>
            <person name="Han C."/>
            <person name="Kuske C."/>
            <person name="Schmutz J."/>
            <person name="Larimer F."/>
            <person name="Land M."/>
            <person name="Hauser L."/>
            <person name="Kyrpides N."/>
            <person name="Kim E.A."/>
            <person name="Richardson P."/>
        </authorList>
    </citation>
    <scope>NUCLEOTIDE SEQUENCE [LARGE SCALE GENOMIC DNA]</scope>
    <source>
        <strain>ATCC 700394 / DSM 18823 / ISDg</strain>
    </source>
</reference>
<proteinExistence type="inferred from homology"/>
<protein>
    <recommendedName>
        <fullName evidence="1">Small ribosomal subunit protein bS21</fullName>
    </recommendedName>
    <alternativeName>
        <fullName evidence="3">30S ribosomal protein S21</fullName>
    </alternativeName>
</protein>
<name>RS21_LACP7</name>
<keyword id="KW-1185">Reference proteome</keyword>
<keyword id="KW-0687">Ribonucleoprotein</keyword>
<keyword id="KW-0689">Ribosomal protein</keyword>
<feature type="chain" id="PRO_1000079401" description="Small ribosomal subunit protein bS21">
    <location>
        <begin position="1"/>
        <end position="58"/>
    </location>
</feature>
<feature type="region of interest" description="Disordered" evidence="2">
    <location>
        <begin position="32"/>
        <end position="58"/>
    </location>
</feature>
<feature type="compositionally biased region" description="Basic and acidic residues" evidence="2">
    <location>
        <begin position="32"/>
        <end position="42"/>
    </location>
</feature>
<feature type="compositionally biased region" description="Basic residues" evidence="2">
    <location>
        <begin position="43"/>
        <end position="58"/>
    </location>
</feature>
<sequence length="58" mass="6931">MSNVIVKENESLDSALRRFKRNCAKAGIQQEIRKREHYEKPSVKRKKKSEAARKRKFK</sequence>